<name>T51A_HADIN</name>
<feature type="signal peptide" evidence="1">
    <location>
        <begin position="1"/>
        <end position="21"/>
    </location>
</feature>
<feature type="propeptide" id="PRO_0000459667">
    <location>
        <begin position="22"/>
        <end position="38"/>
    </location>
</feature>
<feature type="chain" id="PRO_5008896997" description="U5-hexatoxin-Hi1a">
    <location>
        <begin position="39"/>
        <end position="148"/>
    </location>
</feature>
<feature type="region of interest" description="Disordered" evidence="2">
    <location>
        <begin position="125"/>
        <end position="148"/>
    </location>
</feature>
<feature type="sequence conflict" description="In Ref. 2; CDZ18817." evidence="5" ref="2">
    <original>A</original>
    <variation>T</variation>
    <location>
        <position position="7"/>
    </location>
</feature>
<reference key="1">
    <citation type="journal article" date="2020" name="Proc. Natl. Acad. Sci. U.S.A.">
        <title>Structural venomics reveals evolution of a complex venom by duplication and diversification of an ancient peptide-encoding gene.</title>
        <authorList>
            <person name="Pineda S.S."/>
            <person name="Chin Y.K."/>
            <person name="Undheim E.A.B."/>
            <person name="Senff S."/>
            <person name="Mobli M."/>
            <person name="Dauly C."/>
            <person name="Escoubas P."/>
            <person name="Nicholson G.M."/>
            <person name="Kaas Q."/>
            <person name="Guo S."/>
            <person name="Herzig V."/>
            <person name="Mattick J.S."/>
            <person name="King G.F."/>
        </authorList>
    </citation>
    <scope>NUCLEOTIDE SEQUENCE [MRNA]</scope>
    <scope>IDENTIFICATION BY MASS SPECTROMETRY</scope>
    <scope>SUBCELLULAR LOCATION</scope>
    <source>
        <tissue>Venom</tissue>
        <tissue>Venom gland</tissue>
    </source>
</reference>
<reference evidence="7 8" key="2">
    <citation type="thesis" date="2012" institute="The University of Queensland" country="Australia">
        <title>Probing the chemical diversity of venom from the Australian Funnel-web spider Hadronyche infensa.</title>
        <authorList>
            <person name="Pineda S.S."/>
        </authorList>
    </citation>
    <scope>NUCLEOTIDE SEQUENCE [MRNA]</scope>
    <source>
        <tissue>Venom gland</tissue>
    </source>
</reference>
<reference evidence="7 8" key="3">
    <citation type="submission" date="2014-07" db="EMBL/GenBank/DDBJ databases">
        <authorList>
            <person name="Zhang J.E."/>
            <person name="Yang H."/>
            <person name="Guo J."/>
            <person name="Deng Z."/>
            <person name="Luo H."/>
            <person name="Luo M."/>
            <person name="Zhao B."/>
        </authorList>
    </citation>
    <scope>NUCLEOTIDE SEQUENCE [MRNA]</scope>
    <source>
        <tissue>Venom gland</tissue>
    </source>
</reference>
<protein>
    <recommendedName>
        <fullName evidence="4">U5-hexatoxin-Hi1a</fullName>
        <shortName evidence="4">U5-HXTX-Hi1a</shortName>
    </recommendedName>
    <alternativeName>
        <fullName evidence="4">SF7 peptide</fullName>
    </alternativeName>
</protein>
<organism>
    <name type="scientific">Hadronyche infensa</name>
    <name type="common">Fraser island funnel-web spider</name>
    <name type="synonym">Atrax infensus</name>
    <dbReference type="NCBI Taxonomy" id="153481"/>
    <lineage>
        <taxon>Eukaryota</taxon>
        <taxon>Metazoa</taxon>
        <taxon>Ecdysozoa</taxon>
        <taxon>Arthropoda</taxon>
        <taxon>Chelicerata</taxon>
        <taxon>Arachnida</taxon>
        <taxon>Araneae</taxon>
        <taxon>Mygalomorphae</taxon>
        <taxon>Hexathelidae</taxon>
        <taxon>Hadronyche</taxon>
    </lineage>
</organism>
<dbReference type="EMBL" id="HACE01000014">
    <property type="protein sequence ID" value="CDZ18798.1"/>
    <property type="status" value="ALT_SEQ"/>
    <property type="molecule type" value="mRNA"/>
</dbReference>
<dbReference type="EMBL" id="HACE01000033">
    <property type="protein sequence ID" value="CDZ18817.1"/>
    <property type="molecule type" value="mRNA"/>
</dbReference>
<dbReference type="GO" id="GO:0005576">
    <property type="term" value="C:extracellular region"/>
    <property type="evidence" value="ECO:0007669"/>
    <property type="project" value="UniProtKB-SubCell"/>
</dbReference>
<dbReference type="GO" id="GO:0099106">
    <property type="term" value="F:ion channel regulator activity"/>
    <property type="evidence" value="ECO:0007669"/>
    <property type="project" value="UniProtKB-KW"/>
</dbReference>
<dbReference type="GO" id="GO:0090729">
    <property type="term" value="F:toxin activity"/>
    <property type="evidence" value="ECO:0007669"/>
    <property type="project" value="UniProtKB-KW"/>
</dbReference>
<evidence type="ECO:0000255" key="1"/>
<evidence type="ECO:0000256" key="2">
    <source>
        <dbReference type="SAM" id="MobiDB-lite"/>
    </source>
</evidence>
<evidence type="ECO:0000269" key="3">
    <source>
    </source>
</evidence>
<evidence type="ECO:0000303" key="4">
    <source>
    </source>
</evidence>
<evidence type="ECO:0000305" key="5"/>
<evidence type="ECO:0000305" key="6">
    <source>
    </source>
</evidence>
<evidence type="ECO:0000312" key="7">
    <source>
        <dbReference type="EMBL" id="CDZ18798.1"/>
    </source>
</evidence>
<evidence type="ECO:0000312" key="8">
    <source>
        <dbReference type="EMBL" id="CDZ18817.1"/>
    </source>
</evidence>
<proteinExistence type="evidence at protein level"/>
<comment type="function">
    <text evidence="5">Probable ion channel inhibitor.</text>
</comment>
<comment type="subcellular location">
    <subcellularLocation>
        <location evidence="3">Secreted</location>
    </subcellularLocation>
</comment>
<comment type="tissue specificity">
    <text evidence="6">Expressed by the venom gland.</text>
</comment>
<comment type="PTM">
    <text evidence="5">Contains 2 disulfide bonds.</text>
</comment>
<comment type="sequence caution" evidence="5">
    <conflict type="miscellaneous discrepancy">
        <sequence resource="EMBL-CDS" id="CDZ18798"/>
    </conflict>
</comment>
<accession>A0A1D0BN92</accession>
<accession>A0A1D0BNA2</accession>
<sequence length="148" mass="16479">MNFSVVAVALVVVLTVHFTDGQETSSSLPSPPSPLPGRWPWGPKPWHCRPHHHGFTMIYGCEKFSRDMKKEMDALRNNGSESCRTLSTWVEQENCKFEQLMDARSRVVPEEKCLQNMVAFATGITPSTTVTTPTPTTETPTTETPSTP</sequence>
<keyword id="KW-1015">Disulfide bond</keyword>
<keyword id="KW-0872">Ion channel impairing toxin</keyword>
<keyword id="KW-0964">Secreted</keyword>
<keyword id="KW-0732">Signal</keyword>
<keyword id="KW-0800">Toxin</keyword>